<organism>
    <name type="scientific">Bacillus subtilis (strain 168)</name>
    <dbReference type="NCBI Taxonomy" id="224308"/>
    <lineage>
        <taxon>Bacteria</taxon>
        <taxon>Bacillati</taxon>
        <taxon>Bacillota</taxon>
        <taxon>Bacilli</taxon>
        <taxon>Bacillales</taxon>
        <taxon>Bacillaceae</taxon>
        <taxon>Bacillus</taxon>
    </lineage>
</organism>
<gene>
    <name type="primary">ymzB</name>
    <name type="ordered locus">BSU17240</name>
</gene>
<proteinExistence type="predicted"/>
<accession>O31786</accession>
<feature type="chain" id="PRO_0000049636" description="Uncharacterized protein YmzB">
    <location>
        <begin position="1"/>
        <end position="118"/>
    </location>
</feature>
<reference key="1">
    <citation type="journal article" date="1997" name="Nature">
        <title>The complete genome sequence of the Gram-positive bacterium Bacillus subtilis.</title>
        <authorList>
            <person name="Kunst F."/>
            <person name="Ogasawara N."/>
            <person name="Moszer I."/>
            <person name="Albertini A.M."/>
            <person name="Alloni G."/>
            <person name="Azevedo V."/>
            <person name="Bertero M.G."/>
            <person name="Bessieres P."/>
            <person name="Bolotin A."/>
            <person name="Borchert S."/>
            <person name="Borriss R."/>
            <person name="Boursier L."/>
            <person name="Brans A."/>
            <person name="Braun M."/>
            <person name="Brignell S.C."/>
            <person name="Bron S."/>
            <person name="Brouillet S."/>
            <person name="Bruschi C.V."/>
            <person name="Caldwell B."/>
            <person name="Capuano V."/>
            <person name="Carter N.M."/>
            <person name="Choi S.-K."/>
            <person name="Codani J.-J."/>
            <person name="Connerton I.F."/>
            <person name="Cummings N.J."/>
            <person name="Daniel R.A."/>
            <person name="Denizot F."/>
            <person name="Devine K.M."/>
            <person name="Duesterhoeft A."/>
            <person name="Ehrlich S.D."/>
            <person name="Emmerson P.T."/>
            <person name="Entian K.-D."/>
            <person name="Errington J."/>
            <person name="Fabret C."/>
            <person name="Ferrari E."/>
            <person name="Foulger D."/>
            <person name="Fritz C."/>
            <person name="Fujita M."/>
            <person name="Fujita Y."/>
            <person name="Fuma S."/>
            <person name="Galizzi A."/>
            <person name="Galleron N."/>
            <person name="Ghim S.-Y."/>
            <person name="Glaser P."/>
            <person name="Goffeau A."/>
            <person name="Golightly E.J."/>
            <person name="Grandi G."/>
            <person name="Guiseppi G."/>
            <person name="Guy B.J."/>
            <person name="Haga K."/>
            <person name="Haiech J."/>
            <person name="Harwood C.R."/>
            <person name="Henaut A."/>
            <person name="Hilbert H."/>
            <person name="Holsappel S."/>
            <person name="Hosono S."/>
            <person name="Hullo M.-F."/>
            <person name="Itaya M."/>
            <person name="Jones L.-M."/>
            <person name="Joris B."/>
            <person name="Karamata D."/>
            <person name="Kasahara Y."/>
            <person name="Klaerr-Blanchard M."/>
            <person name="Klein C."/>
            <person name="Kobayashi Y."/>
            <person name="Koetter P."/>
            <person name="Koningstein G."/>
            <person name="Krogh S."/>
            <person name="Kumano M."/>
            <person name="Kurita K."/>
            <person name="Lapidus A."/>
            <person name="Lardinois S."/>
            <person name="Lauber J."/>
            <person name="Lazarevic V."/>
            <person name="Lee S.-M."/>
            <person name="Levine A."/>
            <person name="Liu H."/>
            <person name="Masuda S."/>
            <person name="Mauel C."/>
            <person name="Medigue C."/>
            <person name="Medina N."/>
            <person name="Mellado R.P."/>
            <person name="Mizuno M."/>
            <person name="Moestl D."/>
            <person name="Nakai S."/>
            <person name="Noback M."/>
            <person name="Noone D."/>
            <person name="O'Reilly M."/>
            <person name="Ogawa K."/>
            <person name="Ogiwara A."/>
            <person name="Oudega B."/>
            <person name="Park S.-H."/>
            <person name="Parro V."/>
            <person name="Pohl T.M."/>
            <person name="Portetelle D."/>
            <person name="Porwollik S."/>
            <person name="Prescott A.M."/>
            <person name="Presecan E."/>
            <person name="Pujic P."/>
            <person name="Purnelle B."/>
            <person name="Rapoport G."/>
            <person name="Rey M."/>
            <person name="Reynolds S."/>
            <person name="Rieger M."/>
            <person name="Rivolta C."/>
            <person name="Rocha E."/>
            <person name="Roche B."/>
            <person name="Rose M."/>
            <person name="Sadaie Y."/>
            <person name="Sato T."/>
            <person name="Scanlan E."/>
            <person name="Schleich S."/>
            <person name="Schroeter R."/>
            <person name="Scoffone F."/>
            <person name="Sekiguchi J."/>
            <person name="Sekowska A."/>
            <person name="Seror S.J."/>
            <person name="Serror P."/>
            <person name="Shin B.-S."/>
            <person name="Soldo B."/>
            <person name="Sorokin A."/>
            <person name="Tacconi E."/>
            <person name="Takagi T."/>
            <person name="Takahashi H."/>
            <person name="Takemaru K."/>
            <person name="Takeuchi M."/>
            <person name="Tamakoshi A."/>
            <person name="Tanaka T."/>
            <person name="Terpstra P."/>
            <person name="Tognoni A."/>
            <person name="Tosato V."/>
            <person name="Uchiyama S."/>
            <person name="Vandenbol M."/>
            <person name="Vannier F."/>
            <person name="Vassarotti A."/>
            <person name="Viari A."/>
            <person name="Wambutt R."/>
            <person name="Wedler E."/>
            <person name="Wedler H."/>
            <person name="Weitzenegger T."/>
            <person name="Winters P."/>
            <person name="Wipat A."/>
            <person name="Yamamoto H."/>
            <person name="Yamane K."/>
            <person name="Yasumoto K."/>
            <person name="Yata K."/>
            <person name="Yoshida K."/>
            <person name="Yoshikawa H.-F."/>
            <person name="Zumstein E."/>
            <person name="Yoshikawa H."/>
            <person name="Danchin A."/>
        </authorList>
    </citation>
    <scope>NUCLEOTIDE SEQUENCE [LARGE SCALE GENOMIC DNA]</scope>
    <source>
        <strain>168</strain>
    </source>
</reference>
<reference key="2">
    <citation type="journal article" date="1999" name="Genome Res.">
        <title>Detecting and analyzing DNA sequencing errors: toward a higher quality of the Bacillus subtilis genome sequence.</title>
        <authorList>
            <person name="Medigue C."/>
            <person name="Rose M."/>
            <person name="Viari A."/>
            <person name="Danchin A."/>
        </authorList>
    </citation>
    <scope>SEQUENCE REVISION</scope>
</reference>
<reference key="3">
    <citation type="journal article" date="2009" name="Microbiology">
        <title>From a consortium sequence to a unified sequence: the Bacillus subtilis 168 reference genome a decade later.</title>
        <authorList>
            <person name="Barbe V."/>
            <person name="Cruveiller S."/>
            <person name="Kunst F."/>
            <person name="Lenoble P."/>
            <person name="Meurice G."/>
            <person name="Sekowska A."/>
            <person name="Vallenet D."/>
            <person name="Wang T."/>
            <person name="Moszer I."/>
            <person name="Medigue C."/>
            <person name="Danchin A."/>
        </authorList>
    </citation>
    <scope>SEQUENCE REVISION TO 80 AND 118</scope>
</reference>
<protein>
    <recommendedName>
        <fullName>Uncharacterized protein YmzB</fullName>
    </recommendedName>
</protein>
<name>YMZB_BACSU</name>
<sequence length="118" mass="13323">MAHTNTQLSQWLESKVGQTLDIRKGELTHDEEISDLDQIVLHLQKVAIRSTNHPDDYVAKEELVLEGEGTTFTEDGNVPLPQNAYEIPLLGELHIHQENEGLKVVTDRAVYTIDIQHS</sequence>
<keyword id="KW-1185">Reference proteome</keyword>
<dbReference type="EMBL" id="AL009126">
    <property type="protein sequence ID" value="CAB13608.3"/>
    <property type="molecule type" value="Genomic_DNA"/>
</dbReference>
<dbReference type="PIR" id="H69886">
    <property type="entry name" value="H69886"/>
</dbReference>
<dbReference type="RefSeq" id="NP_389606.3">
    <property type="nucleotide sequence ID" value="NC_000964.3"/>
</dbReference>
<dbReference type="RefSeq" id="WP_003245436.1">
    <property type="nucleotide sequence ID" value="NZ_OZ025638.1"/>
</dbReference>
<dbReference type="FunCoup" id="O31786">
    <property type="interactions" value="27"/>
</dbReference>
<dbReference type="STRING" id="224308.BSU17240"/>
<dbReference type="PaxDb" id="224308-BSU17240"/>
<dbReference type="EnsemblBacteria" id="CAB13608">
    <property type="protein sequence ID" value="CAB13608"/>
    <property type="gene ID" value="BSU_17240"/>
</dbReference>
<dbReference type="GeneID" id="940041"/>
<dbReference type="KEGG" id="bsu:BSU17240"/>
<dbReference type="PATRIC" id="fig|224308.179.peg.1869"/>
<dbReference type="eggNOG" id="ENOG5033BZG">
    <property type="taxonomic scope" value="Bacteria"/>
</dbReference>
<dbReference type="InParanoid" id="O31786"/>
<dbReference type="OrthoDB" id="2613420at2"/>
<dbReference type="BioCyc" id="BSUB:BSU17240-MONOMER"/>
<dbReference type="Proteomes" id="UP000001570">
    <property type="component" value="Chromosome"/>
</dbReference>